<proteinExistence type="evidence at protein level"/>
<feature type="signal peptide" evidence="2">
    <location>
        <begin position="1"/>
        <end position="37"/>
    </location>
</feature>
<feature type="chain" id="PRO_0000015047" description="NFAT activation molecule 1">
    <location>
        <begin position="38"/>
        <end position="264"/>
    </location>
</feature>
<feature type="topological domain" description="Extracellular" evidence="2">
    <location>
        <begin position="38"/>
        <end position="159"/>
    </location>
</feature>
<feature type="transmembrane region" description="Helical" evidence="2">
    <location>
        <begin position="160"/>
        <end position="180"/>
    </location>
</feature>
<feature type="topological domain" description="Cytoplasmic" evidence="2">
    <location>
        <begin position="181"/>
        <end position="264"/>
    </location>
</feature>
<feature type="domain" description="Ig-like V-type">
    <location>
        <begin position="49"/>
        <end position="145"/>
    </location>
</feature>
<feature type="domain" description="ITAM">
    <location>
        <begin position="212"/>
        <end position="232"/>
    </location>
</feature>
<feature type="modified residue" description="Phosphotyrosine" evidence="5">
    <location>
        <position position="215"/>
    </location>
</feature>
<feature type="modified residue" description="Phosphotyrosine" evidence="5">
    <location>
        <position position="226"/>
    </location>
</feature>
<feature type="glycosylation site" description="N-linked (GlcNAc...) asparagine" evidence="2">
    <location>
        <position position="105"/>
    </location>
</feature>
<feature type="glycosylation site" description="N-linked (GlcNAc...) asparagine" evidence="2">
    <location>
        <position position="118"/>
    </location>
</feature>
<feature type="disulfide bond" evidence="1">
    <location>
        <begin position="64"/>
        <end position="110"/>
    </location>
</feature>
<feature type="splice variant" id="VSP_008044" description="In isoform 2." evidence="4">
    <original>MESWLLRRGARVRCLHPPSWLPAWCFLCLLPVPQTLQLTGLVSLTHTSLPIMVSLANTDVFF</original>
    <variation>MPGYQLTRQGDIHPNVQSKKDL</variation>
    <location>
        <begin position="1"/>
        <end position="62"/>
    </location>
</feature>
<feature type="splice variant" id="VSP_008043" description="In isoform 3." evidence="4">
    <location>
        <begin position="1"/>
        <end position="51"/>
    </location>
</feature>
<sequence length="264" mass="29988">MESWLLRRGARVRCLHPPSWLPAWCFLCLLPVPQTLQLTGLVSLTHTSLPIMVSLANTDVFFSCRIEDFTRLQRDLPVKLFHTDIHGRRRWEKQINCQHRPGMENHTRDCMVKLSQANTSATGIYYFIVEGEETYQSDGVVILVRDTVYQPPAFKVQEALMLGFTSLMSVLGVLGTALLLWKKKQISVLGKHTAKTCSGLKSTVGTTKPPAESVYTSLQRRETEVYACMKEETGSPVFSQSPATKEKLNRFEDDNEFNLVYENL</sequence>
<dbReference type="EMBL" id="AF361364">
    <property type="protein sequence ID" value="AAL99631.1"/>
    <property type="molecule type" value="mRNA"/>
</dbReference>
<dbReference type="EMBL" id="AK014802">
    <property type="protein sequence ID" value="BAB29558.1"/>
    <property type="molecule type" value="mRNA"/>
</dbReference>
<dbReference type="EMBL" id="AK048992">
    <property type="protein sequence ID" value="BAC33506.1"/>
    <property type="molecule type" value="mRNA"/>
</dbReference>
<dbReference type="EMBL" id="AK150635">
    <property type="protein sequence ID" value="BAE29724.1"/>
    <property type="molecule type" value="mRNA"/>
</dbReference>
<dbReference type="EMBL" id="AK151187">
    <property type="protein sequence ID" value="BAE30186.1"/>
    <property type="molecule type" value="mRNA"/>
</dbReference>
<dbReference type="EMBL" id="AK151884">
    <property type="protein sequence ID" value="BAE30770.1"/>
    <property type="molecule type" value="mRNA"/>
</dbReference>
<dbReference type="EMBL" id="AK152262">
    <property type="protein sequence ID" value="BAE31080.1"/>
    <property type="molecule type" value="mRNA"/>
</dbReference>
<dbReference type="EMBL" id="AK152499">
    <property type="protein sequence ID" value="BAE31268.1"/>
    <property type="molecule type" value="mRNA"/>
</dbReference>
<dbReference type="EMBL" id="AK152688">
    <property type="protein sequence ID" value="BAE31419.1"/>
    <property type="molecule type" value="mRNA"/>
</dbReference>
<dbReference type="EMBL" id="AK155106">
    <property type="protein sequence ID" value="BAE33051.1"/>
    <property type="molecule type" value="mRNA"/>
</dbReference>
<dbReference type="EMBL" id="AK162939">
    <property type="protein sequence ID" value="BAE37125.1"/>
    <property type="molecule type" value="mRNA"/>
</dbReference>
<dbReference type="EMBL" id="AK169918">
    <property type="protein sequence ID" value="BAE41458.1"/>
    <property type="molecule type" value="mRNA"/>
</dbReference>
<dbReference type="EMBL" id="AK170098">
    <property type="protein sequence ID" value="BAE41562.1"/>
    <property type="molecule type" value="mRNA"/>
</dbReference>
<dbReference type="EMBL" id="AK170593">
    <property type="protein sequence ID" value="BAE41900.1"/>
    <property type="molecule type" value="mRNA"/>
</dbReference>
<dbReference type="EMBL" id="AK170677">
    <property type="protein sequence ID" value="BAE41952.1"/>
    <property type="molecule type" value="mRNA"/>
</dbReference>
<dbReference type="EMBL" id="AK170811">
    <property type="protein sequence ID" value="BAE42044.1"/>
    <property type="molecule type" value="mRNA"/>
</dbReference>
<dbReference type="EMBL" id="AK171086">
    <property type="protein sequence ID" value="BAE42239.1"/>
    <property type="molecule type" value="mRNA"/>
</dbReference>
<dbReference type="EMBL" id="AK171201">
    <property type="protein sequence ID" value="BAE42309.1"/>
    <property type="molecule type" value="mRNA"/>
</dbReference>
<dbReference type="CCDS" id="CCDS27694.1">
    <molecule id="Q8R4V1-2"/>
</dbReference>
<dbReference type="CCDS" id="CCDS70651.1">
    <molecule id="Q8R4V1-3"/>
</dbReference>
<dbReference type="CCDS" id="CCDS70652.1">
    <molecule id="Q8R4V1-1"/>
</dbReference>
<dbReference type="RefSeq" id="NP_001258340.1">
    <molecule id="Q8R4V1-1"/>
    <property type="nucleotide sequence ID" value="NM_001271411.1"/>
</dbReference>
<dbReference type="RefSeq" id="NP_001258341.1">
    <property type="nucleotide sequence ID" value="NM_001271412.1"/>
</dbReference>
<dbReference type="RefSeq" id="NP_001258342.1">
    <molecule id="Q8R4V1-3"/>
    <property type="nucleotide sequence ID" value="NM_001271413.1"/>
</dbReference>
<dbReference type="RefSeq" id="NP_001258343.1">
    <molecule id="Q8R4V1-3"/>
    <property type="nucleotide sequence ID" value="NM_001271414.1"/>
</dbReference>
<dbReference type="RefSeq" id="NP_083004.1">
    <molecule id="Q8R4V1-2"/>
    <property type="nucleotide sequence ID" value="NM_028728.3"/>
</dbReference>
<dbReference type="BioGRID" id="216443">
    <property type="interactions" value="1"/>
</dbReference>
<dbReference type="FunCoup" id="Q8R4V1">
    <property type="interactions" value="53"/>
</dbReference>
<dbReference type="IntAct" id="Q8R4V1">
    <property type="interactions" value="2"/>
</dbReference>
<dbReference type="MINT" id="Q8R4V1"/>
<dbReference type="STRING" id="10090.ENSMUSP00000154945"/>
<dbReference type="GlyCosmos" id="Q8R4V1">
    <property type="glycosylation" value="2 sites, No reported glycans"/>
</dbReference>
<dbReference type="GlyGen" id="Q8R4V1">
    <property type="glycosylation" value="2 sites"/>
</dbReference>
<dbReference type="iPTMnet" id="Q8R4V1"/>
<dbReference type="PhosphoSitePlus" id="Q8R4V1"/>
<dbReference type="PaxDb" id="10090-ENSMUSP00000105129"/>
<dbReference type="ProteomicsDB" id="287403">
    <molecule id="Q8R4V1-1"/>
</dbReference>
<dbReference type="ProteomicsDB" id="287404">
    <molecule id="Q8R4V1-2"/>
</dbReference>
<dbReference type="ProteomicsDB" id="287405">
    <molecule id="Q8R4V1-3"/>
</dbReference>
<dbReference type="Antibodypedia" id="27327">
    <property type="antibodies" value="116 antibodies from 25 providers"/>
</dbReference>
<dbReference type="DNASU" id="74039"/>
<dbReference type="Ensembl" id="ENSMUST00000023076.6">
    <molecule id="Q8R4V1-3"/>
    <property type="protein sequence ID" value="ENSMUSP00000023076.6"/>
    <property type="gene ID" value="ENSMUSG00000058099.17"/>
</dbReference>
<dbReference type="Ensembl" id="ENSMUST00000109503.10">
    <molecule id="Q8R4V1-2"/>
    <property type="protein sequence ID" value="ENSMUSP00000105129.4"/>
    <property type="gene ID" value="ENSMUSG00000058099.17"/>
</dbReference>
<dbReference type="Ensembl" id="ENSMUST00000231165.2">
    <molecule id="Q8R4V1-1"/>
    <property type="protein sequence ID" value="ENSMUSP00000154945.2"/>
    <property type="gene ID" value="ENSMUSG00000058099.17"/>
</dbReference>
<dbReference type="GeneID" id="74039"/>
<dbReference type="KEGG" id="mmu:74039"/>
<dbReference type="UCSC" id="uc007wzs.2">
    <molecule id="Q8R4V1-2"/>
    <property type="organism name" value="mouse"/>
</dbReference>
<dbReference type="UCSC" id="uc007wzt.2">
    <molecule id="Q8R4V1-1"/>
    <property type="organism name" value="mouse"/>
</dbReference>
<dbReference type="AGR" id="MGI:1921289"/>
<dbReference type="CTD" id="150372"/>
<dbReference type="MGI" id="MGI:1921289">
    <property type="gene designation" value="Nfam1"/>
</dbReference>
<dbReference type="VEuPathDB" id="HostDB:ENSMUSG00000058099"/>
<dbReference type="eggNOG" id="ENOG502SDBU">
    <property type="taxonomic scope" value="Eukaryota"/>
</dbReference>
<dbReference type="GeneTree" id="ENSGT00390000000787"/>
<dbReference type="HOGENOM" id="CLU_083046_1_0_1"/>
<dbReference type="InParanoid" id="Q8R4V1"/>
<dbReference type="OrthoDB" id="9898104at2759"/>
<dbReference type="PhylomeDB" id="Q8R4V1"/>
<dbReference type="TreeFam" id="TF336307"/>
<dbReference type="Reactome" id="R-MMU-6798695">
    <property type="pathway name" value="Neutrophil degranulation"/>
</dbReference>
<dbReference type="BioGRID-ORCS" id="74039">
    <property type="hits" value="0 hits in 79 CRISPR screens"/>
</dbReference>
<dbReference type="ChiTaRS" id="Nfam1">
    <property type="organism name" value="mouse"/>
</dbReference>
<dbReference type="PRO" id="PR:Q8R4V1"/>
<dbReference type="Proteomes" id="UP000000589">
    <property type="component" value="Chromosome 15"/>
</dbReference>
<dbReference type="RNAct" id="Q8R4V1">
    <property type="molecule type" value="protein"/>
</dbReference>
<dbReference type="Bgee" id="ENSMUSG00000058099">
    <property type="expression patterns" value="Expressed in granulocyte and 80 other cell types or tissues"/>
</dbReference>
<dbReference type="ExpressionAtlas" id="Q8R4V1">
    <property type="expression patterns" value="baseline and differential"/>
</dbReference>
<dbReference type="GO" id="GO:0009986">
    <property type="term" value="C:cell surface"/>
    <property type="evidence" value="ECO:0000314"/>
    <property type="project" value="MGI"/>
</dbReference>
<dbReference type="GO" id="GO:0016020">
    <property type="term" value="C:membrane"/>
    <property type="evidence" value="ECO:0000250"/>
    <property type="project" value="HGNC-UCL"/>
</dbReference>
<dbReference type="GO" id="GO:0045121">
    <property type="term" value="C:membrane raft"/>
    <property type="evidence" value="ECO:0000314"/>
    <property type="project" value="MGI"/>
</dbReference>
<dbReference type="GO" id="GO:0005886">
    <property type="term" value="C:plasma membrane"/>
    <property type="evidence" value="ECO:0007669"/>
    <property type="project" value="UniProtKB-SubCell"/>
</dbReference>
<dbReference type="GO" id="GO:0004888">
    <property type="term" value="F:transmembrane signaling receptor activity"/>
    <property type="evidence" value="ECO:0000250"/>
    <property type="project" value="HGNC-UCL"/>
</dbReference>
<dbReference type="GO" id="GO:0030183">
    <property type="term" value="P:B cell differentiation"/>
    <property type="evidence" value="ECO:0000315"/>
    <property type="project" value="HGNC-UCL"/>
</dbReference>
<dbReference type="GO" id="GO:0050853">
    <property type="term" value="P:B cell receptor signaling pathway"/>
    <property type="evidence" value="ECO:0000314"/>
    <property type="project" value="MGI"/>
</dbReference>
<dbReference type="GO" id="GO:0033173">
    <property type="term" value="P:calcineurin-NFAT signaling cascade"/>
    <property type="evidence" value="ECO:0000250"/>
    <property type="project" value="HGNC-UCL"/>
</dbReference>
<dbReference type="GO" id="GO:0035556">
    <property type="term" value="P:intracellular signal transduction"/>
    <property type="evidence" value="ECO:0000250"/>
    <property type="project" value="HGNC-UCL"/>
</dbReference>
<dbReference type="GO" id="GO:0050861">
    <property type="term" value="P:positive regulation of B cell receptor signaling pathway"/>
    <property type="evidence" value="ECO:0007669"/>
    <property type="project" value="InterPro"/>
</dbReference>
<dbReference type="GO" id="GO:0001819">
    <property type="term" value="P:positive regulation of cytokine production"/>
    <property type="evidence" value="ECO:0007669"/>
    <property type="project" value="InterPro"/>
</dbReference>
<dbReference type="GO" id="GO:0045577">
    <property type="term" value="P:regulation of B cell differentiation"/>
    <property type="evidence" value="ECO:0000314"/>
    <property type="project" value="MGI"/>
</dbReference>
<dbReference type="GO" id="GO:0007165">
    <property type="term" value="P:signal transduction"/>
    <property type="evidence" value="ECO:0000250"/>
    <property type="project" value="HGNC-UCL"/>
</dbReference>
<dbReference type="InterPro" id="IPR033549">
    <property type="entry name" value="NFAM1"/>
</dbReference>
<dbReference type="PANTHER" id="PTHR35680">
    <property type="entry name" value="NFAT ACTIVATION MOLECULE 1"/>
    <property type="match status" value="1"/>
</dbReference>
<dbReference type="PANTHER" id="PTHR35680:SF1">
    <property type="entry name" value="NFAT ACTIVATION MOLECULE 1"/>
    <property type="match status" value="1"/>
</dbReference>
<evidence type="ECO:0000250" key="1"/>
<evidence type="ECO:0000255" key="2"/>
<evidence type="ECO:0000269" key="3">
    <source>
    </source>
</evidence>
<evidence type="ECO:0000303" key="4">
    <source>
    </source>
</evidence>
<evidence type="ECO:0000305" key="5"/>
<accession>Q8R4V1</accession>
<accession>Q3UAX8</accession>
<accession>Q9D5Z3</accession>
<gene>
    <name type="primary">Nfam1</name>
    <name type="synonym">Cnaip</name>
</gene>
<comment type="function">
    <text evidence="1">May function in immune system as a receptor which activates via the calcineurin/NFAT-signaling pathway the downstream cytokine gene promoters. Activates the transcription of IL-13 and TNF-alpha promoters (By similarity). May be involved in the regulation of B-cell, but not T-cell, development.</text>
</comment>
<comment type="subunit">
    <text evidence="3">No direct interaction with the B-cell antigen receptor (BCR). Interacts with SYK; probably involved in BCR signaling. Interacts with ZAP70.</text>
</comment>
<comment type="subcellular location">
    <subcellularLocation>
        <location evidence="1">Cell membrane</location>
        <topology evidence="1">Single-pass type I membrane protein</topology>
    </subcellularLocation>
    <text evidence="1">Partially recruited to lipid rafts upon BCR stimulation.</text>
</comment>
<comment type="alternative products">
    <event type="alternative splicing"/>
    <isoform>
        <id>Q8R4V1-1</id>
        <name>1</name>
        <sequence type="displayed"/>
    </isoform>
    <isoform>
        <id>Q8R4V1-2</id>
        <name>2</name>
        <sequence type="described" ref="VSP_008044"/>
    </isoform>
    <isoform>
        <id>Q8R4V1-3</id>
        <name>3</name>
        <sequence type="described" ref="VSP_008043"/>
    </isoform>
</comment>
<comment type="tissue specificity">
    <text evidence="3">Highly expressed in the spleen, expressed by both B- and CD4+ and CD8+ T-cells, as well as non-T- and non-B-cells, including macrophages and neutrophils. Expressed at low levels, if any, in non-immune tissue.</text>
</comment>
<comment type="developmental stage">
    <text evidence="3">Highest expression in pro-B-cells decreases with B-cell differentiation.</text>
</comment>
<comment type="domain">
    <text>The ITAM domain displays no close similarity to any existing ITAMs, except for four conserved positions. The phosphorylated ITAM domain binds ZAP70 and SYK.</text>
</comment>
<comment type="PTM">
    <text evidence="3">N-glycosylated.</text>
</comment>
<name>NFAM1_MOUSE</name>
<organism>
    <name type="scientific">Mus musculus</name>
    <name type="common">Mouse</name>
    <dbReference type="NCBI Taxonomy" id="10090"/>
    <lineage>
        <taxon>Eukaryota</taxon>
        <taxon>Metazoa</taxon>
        <taxon>Chordata</taxon>
        <taxon>Craniata</taxon>
        <taxon>Vertebrata</taxon>
        <taxon>Euteleostomi</taxon>
        <taxon>Mammalia</taxon>
        <taxon>Eutheria</taxon>
        <taxon>Euarchontoglires</taxon>
        <taxon>Glires</taxon>
        <taxon>Rodentia</taxon>
        <taxon>Myomorpha</taxon>
        <taxon>Muroidea</taxon>
        <taxon>Muridae</taxon>
        <taxon>Murinae</taxon>
        <taxon>Mus</taxon>
        <taxon>Mus</taxon>
    </lineage>
</organism>
<keyword id="KW-0025">Alternative splicing</keyword>
<keyword id="KW-1003">Cell membrane</keyword>
<keyword id="KW-1015">Disulfide bond</keyword>
<keyword id="KW-0325">Glycoprotein</keyword>
<keyword id="KW-0393">Immunoglobulin domain</keyword>
<keyword id="KW-0472">Membrane</keyword>
<keyword id="KW-0597">Phosphoprotein</keyword>
<keyword id="KW-1185">Reference proteome</keyword>
<keyword id="KW-0732">Signal</keyword>
<keyword id="KW-0812">Transmembrane</keyword>
<keyword id="KW-1133">Transmembrane helix</keyword>
<reference key="1">
    <citation type="journal article" date="2004" name="Proc. Natl. Acad. Sci. U.S.A.">
        <title>NFAM1, an immunoreceptor tyrosine-based activation motif-bearing molecule that regulates B cell development and signaling.</title>
        <authorList>
            <person name="Ohtsuka M."/>
            <person name="Arase H."/>
            <person name="Takeuchi A."/>
            <person name="Yamasaki S."/>
            <person name="Shiina R."/>
            <person name="Suenaga T."/>
            <person name="Sakurai D."/>
            <person name="Yokosuka T."/>
            <person name="Arase N."/>
            <person name="Iwashima M."/>
            <person name="Kitamura T."/>
            <person name="Moriya H."/>
            <person name="Saito T."/>
        </authorList>
    </citation>
    <scope>NUCLEOTIDE SEQUENCE [MRNA] (ISOFORM 1)</scope>
    <scope>TISSUE SPECIFICITY</scope>
    <scope>GLYCOSYLATION</scope>
    <scope>DEVELOPMENTAL STAGE</scope>
    <scope>INTERACTION WITH SYK AND ZAP70</scope>
    <source>
        <strain>C57BL/6J</strain>
        <tissue>Spleen</tissue>
    </source>
</reference>
<reference key="2">
    <citation type="journal article" date="2005" name="Science">
        <title>The transcriptional landscape of the mammalian genome.</title>
        <authorList>
            <person name="Carninci P."/>
            <person name="Kasukawa T."/>
            <person name="Katayama S."/>
            <person name="Gough J."/>
            <person name="Frith M.C."/>
            <person name="Maeda N."/>
            <person name="Oyama R."/>
            <person name="Ravasi T."/>
            <person name="Lenhard B."/>
            <person name="Wells C."/>
            <person name="Kodzius R."/>
            <person name="Shimokawa K."/>
            <person name="Bajic V.B."/>
            <person name="Brenner S.E."/>
            <person name="Batalov S."/>
            <person name="Forrest A.R."/>
            <person name="Zavolan M."/>
            <person name="Davis M.J."/>
            <person name="Wilming L.G."/>
            <person name="Aidinis V."/>
            <person name="Allen J.E."/>
            <person name="Ambesi-Impiombato A."/>
            <person name="Apweiler R."/>
            <person name="Aturaliya R.N."/>
            <person name="Bailey T.L."/>
            <person name="Bansal M."/>
            <person name="Baxter L."/>
            <person name="Beisel K.W."/>
            <person name="Bersano T."/>
            <person name="Bono H."/>
            <person name="Chalk A.M."/>
            <person name="Chiu K.P."/>
            <person name="Choudhary V."/>
            <person name="Christoffels A."/>
            <person name="Clutterbuck D.R."/>
            <person name="Crowe M.L."/>
            <person name="Dalla E."/>
            <person name="Dalrymple B.P."/>
            <person name="de Bono B."/>
            <person name="Della Gatta G."/>
            <person name="di Bernardo D."/>
            <person name="Down T."/>
            <person name="Engstrom P."/>
            <person name="Fagiolini M."/>
            <person name="Faulkner G."/>
            <person name="Fletcher C.F."/>
            <person name="Fukushima T."/>
            <person name="Furuno M."/>
            <person name="Futaki S."/>
            <person name="Gariboldi M."/>
            <person name="Georgii-Hemming P."/>
            <person name="Gingeras T.R."/>
            <person name="Gojobori T."/>
            <person name="Green R.E."/>
            <person name="Gustincich S."/>
            <person name="Harbers M."/>
            <person name="Hayashi Y."/>
            <person name="Hensch T.K."/>
            <person name="Hirokawa N."/>
            <person name="Hill D."/>
            <person name="Huminiecki L."/>
            <person name="Iacono M."/>
            <person name="Ikeo K."/>
            <person name="Iwama A."/>
            <person name="Ishikawa T."/>
            <person name="Jakt M."/>
            <person name="Kanapin A."/>
            <person name="Katoh M."/>
            <person name="Kawasawa Y."/>
            <person name="Kelso J."/>
            <person name="Kitamura H."/>
            <person name="Kitano H."/>
            <person name="Kollias G."/>
            <person name="Krishnan S.P."/>
            <person name="Kruger A."/>
            <person name="Kummerfeld S.K."/>
            <person name="Kurochkin I.V."/>
            <person name="Lareau L.F."/>
            <person name="Lazarevic D."/>
            <person name="Lipovich L."/>
            <person name="Liu J."/>
            <person name="Liuni S."/>
            <person name="McWilliam S."/>
            <person name="Madan Babu M."/>
            <person name="Madera M."/>
            <person name="Marchionni L."/>
            <person name="Matsuda H."/>
            <person name="Matsuzawa S."/>
            <person name="Miki H."/>
            <person name="Mignone F."/>
            <person name="Miyake S."/>
            <person name="Morris K."/>
            <person name="Mottagui-Tabar S."/>
            <person name="Mulder N."/>
            <person name="Nakano N."/>
            <person name="Nakauchi H."/>
            <person name="Ng P."/>
            <person name="Nilsson R."/>
            <person name="Nishiguchi S."/>
            <person name="Nishikawa S."/>
            <person name="Nori F."/>
            <person name="Ohara O."/>
            <person name="Okazaki Y."/>
            <person name="Orlando V."/>
            <person name="Pang K.C."/>
            <person name="Pavan W.J."/>
            <person name="Pavesi G."/>
            <person name="Pesole G."/>
            <person name="Petrovsky N."/>
            <person name="Piazza S."/>
            <person name="Reed J."/>
            <person name="Reid J.F."/>
            <person name="Ring B.Z."/>
            <person name="Ringwald M."/>
            <person name="Rost B."/>
            <person name="Ruan Y."/>
            <person name="Salzberg S.L."/>
            <person name="Sandelin A."/>
            <person name="Schneider C."/>
            <person name="Schoenbach C."/>
            <person name="Sekiguchi K."/>
            <person name="Semple C.A."/>
            <person name="Seno S."/>
            <person name="Sessa L."/>
            <person name="Sheng Y."/>
            <person name="Shibata Y."/>
            <person name="Shimada H."/>
            <person name="Shimada K."/>
            <person name="Silva D."/>
            <person name="Sinclair B."/>
            <person name="Sperling S."/>
            <person name="Stupka E."/>
            <person name="Sugiura K."/>
            <person name="Sultana R."/>
            <person name="Takenaka Y."/>
            <person name="Taki K."/>
            <person name="Tammoja K."/>
            <person name="Tan S.L."/>
            <person name="Tang S."/>
            <person name="Taylor M.S."/>
            <person name="Tegner J."/>
            <person name="Teichmann S.A."/>
            <person name="Ueda H.R."/>
            <person name="van Nimwegen E."/>
            <person name="Verardo R."/>
            <person name="Wei C.L."/>
            <person name="Yagi K."/>
            <person name="Yamanishi H."/>
            <person name="Zabarovsky E."/>
            <person name="Zhu S."/>
            <person name="Zimmer A."/>
            <person name="Hide W."/>
            <person name="Bult C."/>
            <person name="Grimmond S.M."/>
            <person name="Teasdale R.D."/>
            <person name="Liu E.T."/>
            <person name="Brusic V."/>
            <person name="Quackenbush J."/>
            <person name="Wahlestedt C."/>
            <person name="Mattick J.S."/>
            <person name="Hume D.A."/>
            <person name="Kai C."/>
            <person name="Sasaki D."/>
            <person name="Tomaru Y."/>
            <person name="Fukuda S."/>
            <person name="Kanamori-Katayama M."/>
            <person name="Suzuki M."/>
            <person name="Aoki J."/>
            <person name="Arakawa T."/>
            <person name="Iida J."/>
            <person name="Imamura K."/>
            <person name="Itoh M."/>
            <person name="Kato T."/>
            <person name="Kawaji H."/>
            <person name="Kawagashira N."/>
            <person name="Kawashima T."/>
            <person name="Kojima M."/>
            <person name="Kondo S."/>
            <person name="Konno H."/>
            <person name="Nakano K."/>
            <person name="Ninomiya N."/>
            <person name="Nishio T."/>
            <person name="Okada M."/>
            <person name="Plessy C."/>
            <person name="Shibata K."/>
            <person name="Shiraki T."/>
            <person name="Suzuki S."/>
            <person name="Tagami M."/>
            <person name="Waki K."/>
            <person name="Watahiki A."/>
            <person name="Okamura-Oho Y."/>
            <person name="Suzuki H."/>
            <person name="Kawai J."/>
            <person name="Hayashizaki Y."/>
        </authorList>
    </citation>
    <scope>NUCLEOTIDE SEQUENCE [LARGE SCALE MRNA] (ISOFORMS 1; 2 AND 3)</scope>
    <source>
        <strain>C57BL/6J</strain>
        <strain>NOD</strain>
        <tissue>Bone marrow</tissue>
        <tissue>Cerebellum</tissue>
        <tissue>Spinal cord</tissue>
        <tissue>Testis</tissue>
    </source>
</reference>
<reference key="3">
    <citation type="journal article" date="2009" name="Immunity">
        <title>The phagosomal proteome in interferon-gamma-activated macrophages.</title>
        <authorList>
            <person name="Trost M."/>
            <person name="English L."/>
            <person name="Lemieux S."/>
            <person name="Courcelles M."/>
            <person name="Desjardins M."/>
            <person name="Thibault P."/>
        </authorList>
    </citation>
    <scope>IDENTIFICATION BY MASS SPECTROMETRY [LARGE SCALE ANALYSIS]</scope>
</reference>
<protein>
    <recommendedName>
        <fullName>NFAT activation molecule 1</fullName>
    </recommendedName>
    <alternativeName>
        <fullName>Calcineurin/NFAT-activating ITAM-containing protein</fullName>
    </alternativeName>
    <alternativeName>
        <fullName>NFAT-activating protein with ITAM motif 1</fullName>
    </alternativeName>
</protein>